<evidence type="ECO:0000250" key="1">
    <source>
        <dbReference type="UniProtKB" id="Q29RW1"/>
    </source>
</evidence>
<evidence type="ECO:0000255" key="2"/>
<evidence type="ECO:0000305" key="3"/>
<keyword id="KW-0009">Actin-binding</keyword>
<keyword id="KW-0067">ATP-binding</keyword>
<keyword id="KW-0175">Coiled coil</keyword>
<keyword id="KW-0963">Cytoplasm</keyword>
<keyword id="KW-0505">Motor protein</keyword>
<keyword id="KW-0514">Muscle protein</keyword>
<keyword id="KW-0518">Myosin</keyword>
<keyword id="KW-0547">Nucleotide-binding</keyword>
<keyword id="KW-0597">Phosphoprotein</keyword>
<keyword id="KW-1185">Reference proteome</keyword>
<keyword id="KW-0787">Thick filament</keyword>
<sequence>RAALQAEIEELRATLEQTERSRKIAEQELLDASERVQLLHTQNASLINAKKKLENDVSQLQSEVEEVIQRARNAEEKAKKAITDAAMMAEELKKEQDTSAHLERMKKNMEQTVKDLQHRLDEAEQLALKGGKKQIQKLEARVRELEGEVENEQKRNAEAVKGLRKHERRVKELTYQTEEDRKNVLRLQDLVDKLQAKVKSYKRQAEEAEEQSNVNLAKFRKLQHELEEAEERADIAESQVNKLRVKSREVHTKISAE</sequence>
<organism>
    <name type="scientific">Rattus norvegicus</name>
    <name type="common">Rat</name>
    <dbReference type="NCBI Taxonomy" id="10116"/>
    <lineage>
        <taxon>Eukaryota</taxon>
        <taxon>Metazoa</taxon>
        <taxon>Chordata</taxon>
        <taxon>Craniata</taxon>
        <taxon>Vertebrata</taxon>
        <taxon>Euteleostomi</taxon>
        <taxon>Mammalia</taxon>
        <taxon>Eutheria</taxon>
        <taxon>Euarchontoglires</taxon>
        <taxon>Glires</taxon>
        <taxon>Rodentia</taxon>
        <taxon>Myomorpha</taxon>
        <taxon>Muroidea</taxon>
        <taxon>Muridae</taxon>
        <taxon>Murinae</taxon>
        <taxon>Rattus</taxon>
    </lineage>
</organism>
<comment type="function">
    <text>Muscle contraction.</text>
</comment>
<comment type="subunit">
    <text>Muscle myosin is a hexameric protein that consists of 2 heavy chain subunits (MHC), 2 alkali light chain subunits (MLC) and 2 regulatory light chain subunits (MLC-2).</text>
</comment>
<comment type="subcellular location">
    <subcellularLocation>
        <location>Cytoplasm</location>
        <location>Myofibril</location>
    </subcellularLocation>
    <text>Thick filaments of the myofibrils.</text>
</comment>
<comment type="developmental stage">
    <text>Transiently expressed during perinatal skeletal muscle development. It is first detected late in fetal life, is maximally expressed at the end of the 1st postnatal week, and is not found in the adult. Although their expression temporally overlaps.</text>
</comment>
<comment type="domain">
    <text>The rodlike tail sequence is highly repetitive, showing cycles of a 28-residue repeat pattern composed of 4 heptapeptides, characteristic for alpha-helical coiled coils.</text>
</comment>
<comment type="domain">
    <text evidence="3">Limited proteolysis of myosin heavy chain produces 1 light meromyosin (LMM) and 1 heavy meromyosin (HMM). HMM can be further cleaved into 2 globular subfragments (S1) and 1 rod-shaped subfragment (S2).</text>
</comment>
<accession>P04462</accession>
<feature type="chain" id="PRO_0000123415" description="Myosin-8">
    <location>
        <begin position="1" status="less than"/>
        <end position="257"/>
    </location>
</feature>
<feature type="coiled-coil region" evidence="2">
    <location>
        <begin position="1" status="less than"/>
        <end position="257"/>
    </location>
</feature>
<feature type="modified residue" description="Phosphoserine" evidence="1">
    <location>
        <position position="33"/>
    </location>
</feature>
<feature type="modified residue" description="Phosphoserine" evidence="1">
    <location>
        <position position="45"/>
    </location>
</feature>
<feature type="modified residue" description="Phosphoserine" evidence="1">
    <location>
        <position position="58"/>
    </location>
</feature>
<feature type="non-terminal residue">
    <location>
        <position position="1"/>
    </location>
</feature>
<gene>
    <name type="primary">Myh8</name>
</gene>
<name>MYH8_RAT</name>
<proteinExistence type="evidence at transcript level"/>
<protein>
    <recommendedName>
        <fullName>Myosin-8</fullName>
    </recommendedName>
    <alternativeName>
        <fullName>Myosin heavy chain 8</fullName>
    </alternativeName>
    <alternativeName>
        <fullName>Myosin heavy chain, skeletal muscle, perinatal</fullName>
        <shortName>MyHC-perinatal</shortName>
    </alternativeName>
</protein>
<reference key="1">
    <citation type="journal article" date="1984" name="J. Biol. Chem.">
        <title>Characterization of a developmentally regulated perinatal myosin heavy-chain gene expressed in skeletal muscle.</title>
        <authorList>
            <person name="Periasamy M."/>
            <person name="Wieczorek D.F."/>
            <person name="Nadal-Ginard B."/>
        </authorList>
    </citation>
    <scope>NUCLEOTIDE SEQUENCE [MRNA]</scope>
</reference>
<dbReference type="EMBL" id="K02111">
    <property type="protein sequence ID" value="AAA41650.1"/>
    <property type="molecule type" value="mRNA"/>
</dbReference>
<dbReference type="PIR" id="A02991">
    <property type="entry name" value="A02991"/>
</dbReference>
<dbReference type="SMR" id="P04462"/>
<dbReference type="IntAct" id="P04462">
    <property type="interactions" value="1"/>
</dbReference>
<dbReference type="PhosphoSitePlus" id="P04462"/>
<dbReference type="PeptideAtlas" id="P04462"/>
<dbReference type="UCSC" id="RGD:620356">
    <property type="organism name" value="rat"/>
</dbReference>
<dbReference type="AGR" id="RGD:620356"/>
<dbReference type="RGD" id="620356">
    <property type="gene designation" value="Myh8"/>
</dbReference>
<dbReference type="InParanoid" id="P04462"/>
<dbReference type="PhylomeDB" id="P04462"/>
<dbReference type="Proteomes" id="UP000002494">
    <property type="component" value="Unplaced"/>
</dbReference>
<dbReference type="GO" id="GO:0005737">
    <property type="term" value="C:cytoplasm"/>
    <property type="evidence" value="ECO:0000266"/>
    <property type="project" value="RGD"/>
</dbReference>
<dbReference type="GO" id="GO:0030016">
    <property type="term" value="C:myofibril"/>
    <property type="evidence" value="ECO:0007669"/>
    <property type="project" value="UniProtKB-SubCell"/>
</dbReference>
<dbReference type="GO" id="GO:0016459">
    <property type="term" value="C:myosin complex"/>
    <property type="evidence" value="ECO:0000266"/>
    <property type="project" value="RGD"/>
</dbReference>
<dbReference type="GO" id="GO:0032982">
    <property type="term" value="C:myosin filament"/>
    <property type="evidence" value="ECO:0007669"/>
    <property type="project" value="UniProtKB-KW"/>
</dbReference>
<dbReference type="GO" id="GO:0003779">
    <property type="term" value="F:actin binding"/>
    <property type="evidence" value="ECO:0007669"/>
    <property type="project" value="UniProtKB-KW"/>
</dbReference>
<dbReference type="GO" id="GO:0005524">
    <property type="term" value="F:ATP binding"/>
    <property type="evidence" value="ECO:0000266"/>
    <property type="project" value="RGD"/>
</dbReference>
<dbReference type="GO" id="GO:0016887">
    <property type="term" value="F:ATP hydrolysis activity"/>
    <property type="evidence" value="ECO:0000266"/>
    <property type="project" value="RGD"/>
</dbReference>
<dbReference type="GO" id="GO:0000146">
    <property type="term" value="F:microfilament motor activity"/>
    <property type="evidence" value="ECO:0000266"/>
    <property type="project" value="RGD"/>
</dbReference>
<dbReference type="GO" id="GO:0046034">
    <property type="term" value="P:ATP metabolic process"/>
    <property type="evidence" value="ECO:0000266"/>
    <property type="project" value="RGD"/>
</dbReference>
<dbReference type="GO" id="GO:0030049">
    <property type="term" value="P:muscle filament sliding"/>
    <property type="evidence" value="ECO:0000266"/>
    <property type="project" value="RGD"/>
</dbReference>
<dbReference type="GO" id="GO:0003009">
    <property type="term" value="P:skeletal muscle contraction"/>
    <property type="evidence" value="ECO:0000266"/>
    <property type="project" value="RGD"/>
</dbReference>
<dbReference type="FunFam" id="1.20.5.370:FF:000001">
    <property type="entry name" value="Myosin heavy chain"/>
    <property type="match status" value="1"/>
</dbReference>
<dbReference type="FunFam" id="1.20.5.370:FF:000002">
    <property type="entry name" value="Myosin heavy chain"/>
    <property type="match status" value="1"/>
</dbReference>
<dbReference type="Gene3D" id="1.20.5.370">
    <property type="match status" value="2"/>
</dbReference>
<dbReference type="Gene3D" id="6.10.250.2420">
    <property type="match status" value="1"/>
</dbReference>
<dbReference type="InterPro" id="IPR002928">
    <property type="entry name" value="Myosin_tail"/>
</dbReference>
<dbReference type="InterPro" id="IPR014751">
    <property type="entry name" value="XRCC4-like_C"/>
</dbReference>
<dbReference type="PANTHER" id="PTHR46349">
    <property type="entry name" value="CINGULIN-LIKE PROTEIN 1-RELATED"/>
    <property type="match status" value="1"/>
</dbReference>
<dbReference type="PANTHER" id="PTHR46349:SF6">
    <property type="entry name" value="MYOSIN-6-LIKE"/>
    <property type="match status" value="1"/>
</dbReference>
<dbReference type="Pfam" id="PF01576">
    <property type="entry name" value="Myosin_tail_1"/>
    <property type="match status" value="1"/>
</dbReference>
<dbReference type="SUPFAM" id="SSF57997">
    <property type="entry name" value="Tropomyosin"/>
    <property type="match status" value="1"/>
</dbReference>